<dbReference type="EC" id="3.1.3.5" evidence="1"/>
<dbReference type="EMBL" id="CP000563">
    <property type="protein sequence ID" value="ABN62603.1"/>
    <property type="molecule type" value="Genomic_DNA"/>
</dbReference>
<dbReference type="RefSeq" id="WP_006086855.1">
    <property type="nucleotide sequence ID" value="NC_009052.1"/>
</dbReference>
<dbReference type="SMR" id="A3D790"/>
<dbReference type="STRING" id="325240.Sbal_3122"/>
<dbReference type="KEGG" id="sbl:Sbal_3122"/>
<dbReference type="HOGENOM" id="CLU_045192_1_2_6"/>
<dbReference type="OrthoDB" id="9780815at2"/>
<dbReference type="Proteomes" id="UP000001557">
    <property type="component" value="Chromosome"/>
</dbReference>
<dbReference type="GO" id="GO:0005737">
    <property type="term" value="C:cytoplasm"/>
    <property type="evidence" value="ECO:0007669"/>
    <property type="project" value="UniProtKB-SubCell"/>
</dbReference>
<dbReference type="GO" id="GO:0008254">
    <property type="term" value="F:3'-nucleotidase activity"/>
    <property type="evidence" value="ECO:0007669"/>
    <property type="project" value="TreeGrafter"/>
</dbReference>
<dbReference type="GO" id="GO:0008253">
    <property type="term" value="F:5'-nucleotidase activity"/>
    <property type="evidence" value="ECO:0007669"/>
    <property type="project" value="UniProtKB-UniRule"/>
</dbReference>
<dbReference type="GO" id="GO:0004309">
    <property type="term" value="F:exopolyphosphatase activity"/>
    <property type="evidence" value="ECO:0007669"/>
    <property type="project" value="TreeGrafter"/>
</dbReference>
<dbReference type="GO" id="GO:0046872">
    <property type="term" value="F:metal ion binding"/>
    <property type="evidence" value="ECO:0007669"/>
    <property type="project" value="UniProtKB-UniRule"/>
</dbReference>
<dbReference type="GO" id="GO:0000166">
    <property type="term" value="F:nucleotide binding"/>
    <property type="evidence" value="ECO:0007669"/>
    <property type="project" value="UniProtKB-KW"/>
</dbReference>
<dbReference type="FunFam" id="3.40.1210.10:FF:000001">
    <property type="entry name" value="5'/3'-nucleotidase SurE"/>
    <property type="match status" value="1"/>
</dbReference>
<dbReference type="Gene3D" id="3.40.1210.10">
    <property type="entry name" value="Survival protein SurE-like phosphatase/nucleotidase"/>
    <property type="match status" value="1"/>
</dbReference>
<dbReference type="HAMAP" id="MF_00060">
    <property type="entry name" value="SurE"/>
    <property type="match status" value="1"/>
</dbReference>
<dbReference type="InterPro" id="IPR030048">
    <property type="entry name" value="SurE"/>
</dbReference>
<dbReference type="InterPro" id="IPR002828">
    <property type="entry name" value="SurE-like_Pase/nucleotidase"/>
</dbReference>
<dbReference type="InterPro" id="IPR036523">
    <property type="entry name" value="SurE-like_sf"/>
</dbReference>
<dbReference type="NCBIfam" id="NF001489">
    <property type="entry name" value="PRK00346.1-3"/>
    <property type="match status" value="1"/>
</dbReference>
<dbReference type="NCBIfam" id="NF001490">
    <property type="entry name" value="PRK00346.1-4"/>
    <property type="match status" value="1"/>
</dbReference>
<dbReference type="NCBIfam" id="TIGR00087">
    <property type="entry name" value="surE"/>
    <property type="match status" value="1"/>
</dbReference>
<dbReference type="PANTHER" id="PTHR30457">
    <property type="entry name" value="5'-NUCLEOTIDASE SURE"/>
    <property type="match status" value="1"/>
</dbReference>
<dbReference type="PANTHER" id="PTHR30457:SF12">
    <property type="entry name" value="5'_3'-NUCLEOTIDASE SURE"/>
    <property type="match status" value="1"/>
</dbReference>
<dbReference type="Pfam" id="PF01975">
    <property type="entry name" value="SurE"/>
    <property type="match status" value="1"/>
</dbReference>
<dbReference type="SUPFAM" id="SSF64167">
    <property type="entry name" value="SurE-like"/>
    <property type="match status" value="1"/>
</dbReference>
<sequence>MIRILVSNDDGVNAPGIKALTEALTEIATVLTVGPDRNCSGASNSLTLTNPLRINRLDNGYISVHGTPTDCVHLAIRELYDGEPDMVVSGINAGANMGDDTLYSGTVAAAMEGRFLGFPAVAISLNGRKFEHYQSAAVYARRIVQGLLAQPLAKDQILNVNVPDLPLDQIKGIKVTRLGARHKAEGIVRTQDPAGREIFWLGPPGQEQDATEGTDFHAIANGYVSITPLTVDLTAYGQLTALQNWVDKI</sequence>
<gene>
    <name evidence="1" type="primary">surE</name>
    <name type="ordered locus">Sbal_3122</name>
</gene>
<evidence type="ECO:0000255" key="1">
    <source>
        <dbReference type="HAMAP-Rule" id="MF_00060"/>
    </source>
</evidence>
<feature type="chain" id="PRO_0000335270" description="5'-nucleotidase SurE">
    <location>
        <begin position="1"/>
        <end position="249"/>
    </location>
</feature>
<feature type="binding site" evidence="1">
    <location>
        <position position="9"/>
    </location>
    <ligand>
        <name>a divalent metal cation</name>
        <dbReference type="ChEBI" id="CHEBI:60240"/>
    </ligand>
</feature>
<feature type="binding site" evidence="1">
    <location>
        <position position="10"/>
    </location>
    <ligand>
        <name>a divalent metal cation</name>
        <dbReference type="ChEBI" id="CHEBI:60240"/>
    </ligand>
</feature>
<feature type="binding site" evidence="1">
    <location>
        <position position="40"/>
    </location>
    <ligand>
        <name>a divalent metal cation</name>
        <dbReference type="ChEBI" id="CHEBI:60240"/>
    </ligand>
</feature>
<feature type="binding site" evidence="1">
    <location>
        <position position="92"/>
    </location>
    <ligand>
        <name>a divalent metal cation</name>
        <dbReference type="ChEBI" id="CHEBI:60240"/>
    </ligand>
</feature>
<proteinExistence type="inferred from homology"/>
<accession>A3D790</accession>
<comment type="function">
    <text evidence="1">Nucleotidase that shows phosphatase activity on nucleoside 5'-monophosphates.</text>
</comment>
<comment type="catalytic activity">
    <reaction evidence="1">
        <text>a ribonucleoside 5'-phosphate + H2O = a ribonucleoside + phosphate</text>
        <dbReference type="Rhea" id="RHEA:12484"/>
        <dbReference type="ChEBI" id="CHEBI:15377"/>
        <dbReference type="ChEBI" id="CHEBI:18254"/>
        <dbReference type="ChEBI" id="CHEBI:43474"/>
        <dbReference type="ChEBI" id="CHEBI:58043"/>
        <dbReference type="EC" id="3.1.3.5"/>
    </reaction>
</comment>
<comment type="cofactor">
    <cofactor evidence="1">
        <name>a divalent metal cation</name>
        <dbReference type="ChEBI" id="CHEBI:60240"/>
    </cofactor>
    <text evidence="1">Binds 1 divalent metal cation per subunit.</text>
</comment>
<comment type="subcellular location">
    <subcellularLocation>
        <location evidence="1">Cytoplasm</location>
    </subcellularLocation>
</comment>
<comment type="similarity">
    <text evidence="1">Belongs to the SurE nucleotidase family.</text>
</comment>
<organism>
    <name type="scientific">Shewanella baltica (strain OS155 / ATCC BAA-1091)</name>
    <dbReference type="NCBI Taxonomy" id="325240"/>
    <lineage>
        <taxon>Bacteria</taxon>
        <taxon>Pseudomonadati</taxon>
        <taxon>Pseudomonadota</taxon>
        <taxon>Gammaproteobacteria</taxon>
        <taxon>Alteromonadales</taxon>
        <taxon>Shewanellaceae</taxon>
        <taxon>Shewanella</taxon>
    </lineage>
</organism>
<reference key="1">
    <citation type="submission" date="2007-02" db="EMBL/GenBank/DDBJ databases">
        <title>Complete sequence of chromosome of Shewanella baltica OS155.</title>
        <authorList>
            <consortium name="US DOE Joint Genome Institute"/>
            <person name="Copeland A."/>
            <person name="Lucas S."/>
            <person name="Lapidus A."/>
            <person name="Barry K."/>
            <person name="Detter J.C."/>
            <person name="Glavina del Rio T."/>
            <person name="Hammon N."/>
            <person name="Israni S."/>
            <person name="Dalin E."/>
            <person name="Tice H."/>
            <person name="Pitluck S."/>
            <person name="Sims D.R."/>
            <person name="Brettin T."/>
            <person name="Bruce D."/>
            <person name="Han C."/>
            <person name="Tapia R."/>
            <person name="Brainard J."/>
            <person name="Schmutz J."/>
            <person name="Larimer F."/>
            <person name="Land M."/>
            <person name="Hauser L."/>
            <person name="Kyrpides N."/>
            <person name="Mikhailova N."/>
            <person name="Brettar I."/>
            <person name="Klappenbach J."/>
            <person name="Konstantinidis K."/>
            <person name="Rodrigues J."/>
            <person name="Tiedje J."/>
            <person name="Richardson P."/>
        </authorList>
    </citation>
    <scope>NUCLEOTIDE SEQUENCE [LARGE SCALE GENOMIC DNA]</scope>
    <source>
        <strain>OS155 / ATCC BAA-1091</strain>
    </source>
</reference>
<protein>
    <recommendedName>
        <fullName evidence="1">5'-nucleotidase SurE</fullName>
        <ecNumber evidence="1">3.1.3.5</ecNumber>
    </recommendedName>
    <alternativeName>
        <fullName evidence="1">Nucleoside 5'-monophosphate phosphohydrolase</fullName>
    </alternativeName>
</protein>
<keyword id="KW-0963">Cytoplasm</keyword>
<keyword id="KW-0378">Hydrolase</keyword>
<keyword id="KW-0479">Metal-binding</keyword>
<keyword id="KW-0547">Nucleotide-binding</keyword>
<keyword id="KW-1185">Reference proteome</keyword>
<name>SURE_SHEB5</name>